<sequence length="274" mass="29765">MLSVATRSGPFAPVLSATSRGVAGALRPLVQATVPATPEQPVLNLKRPFLSRESLSGQAVRRPLVASVGLNVPASVCYSHTDVRVPDFSEYRRLEVLDSTKSSRESSEARKGFSYLVTGVTTVGVAYAAKNVVTQFVSSMSASADVLALAKIEIKLSDIPEGKNMTFKWRGKPLFVRHRTQKEIEQEAAVELSQLRDPQHDLDRVKKPEWVILIGVCTHLGCVPIANAGDFGGYYCPCHGSHYDASGRIRLGPAPLNLEVPIYEFTSDDMVIVG</sequence>
<feature type="chain" id="PRO_0000307247" description="Cytochrome b-c1 complex subunit 9" evidence="5">
    <location>
        <begin position="1"/>
        <end position="78"/>
    </location>
</feature>
<feature type="chain" id="PRO_0000030670" description="Cytochrome b-c1 complex subunit Rieske, mitochondrial">
    <location>
        <begin position="79"/>
        <end position="274"/>
    </location>
</feature>
<feature type="topological domain" description="Mitochondrial matrix" evidence="2">
    <location>
        <begin position="79"/>
        <end position="103"/>
    </location>
</feature>
<feature type="transmembrane region" description="Helical" evidence="2">
    <location>
        <begin position="104"/>
        <end position="140"/>
    </location>
</feature>
<feature type="topological domain" description="Mitochondrial intermembrane" evidence="2">
    <location>
        <begin position="141"/>
        <end position="274"/>
    </location>
</feature>
<feature type="domain" description="Rieske" evidence="6">
    <location>
        <begin position="187"/>
        <end position="272"/>
    </location>
</feature>
<feature type="binding site" evidence="2">
    <location>
        <position position="217"/>
    </location>
    <ligand>
        <name>[2Fe-2S] cluster</name>
        <dbReference type="ChEBI" id="CHEBI:190135"/>
    </ligand>
</feature>
<feature type="binding site" evidence="2">
    <location>
        <position position="219"/>
    </location>
    <ligand>
        <name>[2Fe-2S] cluster</name>
        <dbReference type="ChEBI" id="CHEBI:190135"/>
    </ligand>
</feature>
<feature type="binding site" evidence="2">
    <location>
        <position position="236"/>
    </location>
    <ligand>
        <name>[2Fe-2S] cluster</name>
        <dbReference type="ChEBI" id="CHEBI:190135"/>
    </ligand>
</feature>
<feature type="binding site" evidence="2">
    <location>
        <position position="239"/>
    </location>
    <ligand>
        <name>[2Fe-2S] cluster</name>
        <dbReference type="ChEBI" id="CHEBI:190135"/>
    </ligand>
</feature>
<feature type="binding site" evidence="2">
    <location>
        <position position="241"/>
    </location>
    <ligand>
        <name>[2Fe-2S] cluster</name>
        <dbReference type="ChEBI" id="CHEBI:190135"/>
    </ligand>
</feature>
<feature type="disulfide bond" evidence="2">
    <location>
        <begin position="222"/>
        <end position="238"/>
    </location>
</feature>
<reference key="1">
    <citation type="submission" date="2003-08" db="EMBL/GenBank/DDBJ databases">
        <title>Molecular evolution of the iron sulfur protein and subunit 9 of complex III of the electron transport chain in primates.</title>
        <authorList>
            <person name="Doan J.W."/>
            <person name="Wildman D.E."/>
            <person name="Schmidt T.R."/>
            <person name="Weiss M.L."/>
            <person name="Goodman M."/>
            <person name="Grossman L.I."/>
        </authorList>
    </citation>
    <scope>NUCLEOTIDE SEQUENCE [GENOMIC DNA]</scope>
</reference>
<protein>
    <recommendedName>
        <fullName>Cytochrome b-c1 complex subunit Rieske, mitochondrial</fullName>
        <ecNumber>7.1.1.8</ecNumber>
    </recommendedName>
    <alternativeName>
        <fullName>Complex III subunit 5</fullName>
    </alternativeName>
    <alternativeName>
        <fullName>Cytochrome b-c1 complex subunit 5</fullName>
    </alternativeName>
    <alternativeName>
        <fullName>Rieske iron-sulfur protein</fullName>
        <shortName>RISP</shortName>
    </alternativeName>
    <alternativeName>
        <fullName evidence="7">Rieske protein UQCRFS1</fullName>
    </alternativeName>
    <alternativeName>
        <fullName>Ubiquinol-cytochrome c reductase iron-sulfur subunit</fullName>
    </alternativeName>
    <component>
        <recommendedName>
            <fullName evidence="2">Cytochrome b-c1 complex subunit 9</fullName>
            <shortName evidence="2">Su9</shortName>
            <shortName evidence="2">Subunit 9</shortName>
        </recommendedName>
        <alternativeName>
            <fullName evidence="2">8 kDa subunit 9</fullName>
        </alternativeName>
        <alternativeName>
            <fullName>Complex III subunit IX</fullName>
        </alternativeName>
        <alternativeName>
            <fullName>Cytochrome b-c1 complex subunit 11</fullName>
        </alternativeName>
        <alternativeName>
            <fullName>UQCRFS1 mitochondrial targeting sequence</fullName>
            <shortName>UQCRFS1 MTS</shortName>
        </alternativeName>
        <alternativeName>
            <fullName evidence="2">Ubiquinol-cytochrome c reductase 8 kDa protein</fullName>
        </alternativeName>
    </component>
</protein>
<proteinExistence type="inferred from homology"/>
<accession>Q69BK3</accession>
<dbReference type="EC" id="7.1.1.8"/>
<dbReference type="EMBL" id="AY387502">
    <property type="protein sequence ID" value="AAR32733.1"/>
    <property type="molecule type" value="Genomic_DNA"/>
</dbReference>
<dbReference type="EMBL" id="AY387501">
    <property type="protein sequence ID" value="AAR32733.1"/>
    <property type="status" value="JOINED"/>
    <property type="molecule type" value="Genomic_DNA"/>
</dbReference>
<dbReference type="SMR" id="Q69BK3"/>
<dbReference type="GO" id="GO:0005743">
    <property type="term" value="C:mitochondrial inner membrane"/>
    <property type="evidence" value="ECO:0007669"/>
    <property type="project" value="UniProtKB-SubCell"/>
</dbReference>
<dbReference type="GO" id="GO:0005739">
    <property type="term" value="C:mitochondrion"/>
    <property type="evidence" value="ECO:0000250"/>
    <property type="project" value="UniProtKB"/>
</dbReference>
<dbReference type="GO" id="GO:0051537">
    <property type="term" value="F:2 iron, 2 sulfur cluster binding"/>
    <property type="evidence" value="ECO:0007669"/>
    <property type="project" value="UniProtKB-KW"/>
</dbReference>
<dbReference type="GO" id="GO:0046872">
    <property type="term" value="F:metal ion binding"/>
    <property type="evidence" value="ECO:0007669"/>
    <property type="project" value="UniProtKB-KW"/>
</dbReference>
<dbReference type="GO" id="GO:0008121">
    <property type="term" value="F:ubiquinol-cytochrome-c reductase activity"/>
    <property type="evidence" value="ECO:0007669"/>
    <property type="project" value="UniProtKB-EC"/>
</dbReference>
<dbReference type="GO" id="GO:0022904">
    <property type="term" value="P:respiratory electron transport chain"/>
    <property type="evidence" value="ECO:0000250"/>
    <property type="project" value="UniProtKB"/>
</dbReference>
<dbReference type="CDD" id="cd03470">
    <property type="entry name" value="Rieske_cytochrome_bc1"/>
    <property type="match status" value="1"/>
</dbReference>
<dbReference type="FunFam" id="1.20.5.270:FF:000001">
    <property type="entry name" value="Cytochrome b-c1 complex subunit Rieske, mitochondrial"/>
    <property type="match status" value="1"/>
</dbReference>
<dbReference type="FunFam" id="2.10.210.10:FF:000001">
    <property type="entry name" value="Cytochrome b-c1 complex subunit Rieske, mitochondrial"/>
    <property type="match status" value="1"/>
</dbReference>
<dbReference type="FunFam" id="2.102.10.10:FF:000001">
    <property type="entry name" value="Cytochrome b-c1 complex subunit Rieske, mitochondrial"/>
    <property type="match status" value="1"/>
</dbReference>
<dbReference type="Gene3D" id="2.10.210.10">
    <property type="entry name" value="Cytochrome Bc1 Complex, Chain I"/>
    <property type="match status" value="1"/>
</dbReference>
<dbReference type="Gene3D" id="2.102.10.10">
    <property type="entry name" value="Rieske [2Fe-2S] iron-sulphur domain"/>
    <property type="match status" value="1"/>
</dbReference>
<dbReference type="Gene3D" id="1.20.5.270">
    <property type="entry name" value="Ubiquinol cytochrome reductase, transmembrane domain"/>
    <property type="match status" value="1"/>
</dbReference>
<dbReference type="InterPro" id="IPR037008">
    <property type="entry name" value="bc1_Rieske_TM_sf"/>
</dbReference>
<dbReference type="InterPro" id="IPR011070">
    <property type="entry name" value="Globular_prot_asu/bsu"/>
</dbReference>
<dbReference type="InterPro" id="IPR017941">
    <property type="entry name" value="Rieske_2Fe-2S"/>
</dbReference>
<dbReference type="InterPro" id="IPR036922">
    <property type="entry name" value="Rieske_2Fe-2S_sf"/>
</dbReference>
<dbReference type="InterPro" id="IPR014349">
    <property type="entry name" value="Rieske_Fe-S_prot"/>
</dbReference>
<dbReference type="InterPro" id="IPR005805">
    <property type="entry name" value="Rieske_Fe-S_prot_C"/>
</dbReference>
<dbReference type="InterPro" id="IPR004192">
    <property type="entry name" value="Rieske_TM"/>
</dbReference>
<dbReference type="InterPro" id="IPR006317">
    <property type="entry name" value="Ubiquinol_cyt_c_Rdtase_Fe-S-su"/>
</dbReference>
<dbReference type="InterPro" id="IPR015248">
    <property type="entry name" value="UQCRFS1_N"/>
</dbReference>
<dbReference type="NCBIfam" id="TIGR01416">
    <property type="entry name" value="Rieske_proteo"/>
    <property type="match status" value="1"/>
</dbReference>
<dbReference type="PANTHER" id="PTHR10134">
    <property type="entry name" value="CYTOCHROME B-C1 COMPLEX SUBUNIT RIESKE, MITOCHONDRIAL"/>
    <property type="match status" value="1"/>
</dbReference>
<dbReference type="Pfam" id="PF00355">
    <property type="entry name" value="Rieske"/>
    <property type="match status" value="1"/>
</dbReference>
<dbReference type="Pfam" id="PF09165">
    <property type="entry name" value="Ubiq-Cytc-red_N"/>
    <property type="match status" value="1"/>
</dbReference>
<dbReference type="Pfam" id="PF02921">
    <property type="entry name" value="UCR_TM"/>
    <property type="match status" value="1"/>
</dbReference>
<dbReference type="PRINTS" id="PR00162">
    <property type="entry name" value="RIESKE"/>
</dbReference>
<dbReference type="SUPFAM" id="SSF50022">
    <property type="entry name" value="ISP domain"/>
    <property type="match status" value="1"/>
</dbReference>
<dbReference type="SUPFAM" id="SSF81502">
    <property type="entry name" value="ISP transmembrane anchor"/>
    <property type="match status" value="1"/>
</dbReference>
<dbReference type="SUPFAM" id="SSF56568">
    <property type="entry name" value="Non-globular alpha+beta subunits of globular proteins"/>
    <property type="match status" value="1"/>
</dbReference>
<dbReference type="PROSITE" id="PS51296">
    <property type="entry name" value="RIESKE"/>
    <property type="match status" value="1"/>
</dbReference>
<comment type="function">
    <molecule>Cytochrome b-c1 complex subunit Rieske, mitochondrial</molecule>
    <text evidence="1 3">Component of the ubiquinol-cytochrome c oxidoreductase, a multisubunit transmembrane complex that is part of the mitochondrial electron transport chain which drives oxidative phosphorylation. The respiratory chain contains 3 multisubunit complexes succinate dehydrogenase (complex II, CII), ubiquinol-cytochrome c oxidoreductase (cytochrome b-c1 complex, complex III, CIII) and cytochrome c oxidase (complex IV, CIV), that cooperate to transfer electrons derived from NADH and succinate to molecular oxygen, creating an electrochemical gradient over the inner membrane that drives transmembrane transport and the ATP synthase. The cytochrome b-c1 complex catalyzes electron transfer from ubiquinol to cytochrome c, linking this redox reaction to translocation of protons across the mitochondrial inner membrane, with protons being carried across the membrane as hydrogens on the quinol. In the process called Q cycle, 2 protons are consumed from the matrix, 4 protons are released into the intermembrane space and 2 electrons are passed to cytochrome c. The Rieske protein is a catalytic core subunit containing a [2Fe-2S] iron-sulfur cluster. It cycles between 2 conformational states during catalysis to transfer electrons from the quinol bound in the Q(0) site in cytochrome b to cytochrome c1 (By similarity). Incorporation of UQCRFS1 is the penultimate step in complex III assembly (By similarity).</text>
</comment>
<comment type="function">
    <molecule>Cytochrome b-c1 complex subunit 9</molecule>
    <text evidence="2 3 5">Component of the ubiquinol-cytochrome c oxidoreductase (cytochrome b-c1 complex, complex III, CIII). UQCRFS1 undergoes proteolytic processing once it is incorporated in the complex III dimer. One of the fragments, called subunit 9, corresponds to its mitochondrial targeting sequence (MTS) (By similarity). The proteolytic processing is necessary for the correct insertion of UQCRFS1 in the complex III dimer, but the persistence of UQCRFS1-derived fragments may prevent newly imported UQCRFS1 to be processed and assembled into complex III and is detrimental for the complex III structure and function (By similarity).</text>
</comment>
<comment type="catalytic activity">
    <reaction evidence="1">
        <text>a quinol + 2 Fe(III)-[cytochrome c](out) = a quinone + 2 Fe(II)-[cytochrome c](out) + 2 H(+)(out)</text>
        <dbReference type="Rhea" id="RHEA:11484"/>
        <dbReference type="Rhea" id="RHEA-COMP:10350"/>
        <dbReference type="Rhea" id="RHEA-COMP:14399"/>
        <dbReference type="ChEBI" id="CHEBI:15378"/>
        <dbReference type="ChEBI" id="CHEBI:24646"/>
        <dbReference type="ChEBI" id="CHEBI:29033"/>
        <dbReference type="ChEBI" id="CHEBI:29034"/>
        <dbReference type="ChEBI" id="CHEBI:132124"/>
        <dbReference type="EC" id="7.1.1.8"/>
    </reaction>
</comment>
<comment type="cofactor">
    <cofactor evidence="6">
        <name>[2Fe-2S] cluster</name>
        <dbReference type="ChEBI" id="CHEBI:190135"/>
    </cofactor>
    <text evidence="3 6">Binds 1 [2Fe-2S] cluster per subunit. Fe-S cluster delivery to the Rieske protein is mediated by components of the iron sulfur (Fe-S) cluster assembly machinery that reside in the mitochondrial matrix (including HSC20 and LYRM7) (By similarity).</text>
</comment>
<comment type="subunit">
    <molecule>Cytochrome b-c1 complex subunit Rieske, mitochondrial</molecule>
    <text evidence="2 3">Component of the ubiquinol-cytochrome c oxidoreductase (cytochrome b-c1 complex, complex III, CIII), a multisubunit enzyme composed of 11 subunits. The complex is composed of 3 respiratory subunits cytochrome b, cytochrome c1 and Rieske protein UQCRFS1, 2 core protein subunits UQCRC1/QCR1 and UQCRC2/QCR2, and 6 low-molecular weight protein subunits UQCRH/QCR6, UQCRB/QCR7, UQCRQ/QCR8, UQCR10/QCR9, UQCR11/QCR10 and subunit 9, the cleavage product of Rieske protein UQCRFS1. The complex exists as an obligatory dimer and forms supercomplexes (SCs) in the inner mitochondrial membrane with NADH-ubiquinone oxidoreductase (complex I, CI) and cytochrome c oxidase (complex IV, CIV), resulting in different assemblies (supercomplex SCI(1)III(2)IV(1) and megacomplex MCI(2)III(2)IV(2)) (By similarity). Incorporation of the Rieske protein UQCRFS1 is the penultimate step in complex III assembly. Interacts with TTC19, which is involved in the clearance of UQCRFS1 fragments (By similarity).</text>
</comment>
<comment type="subunit">
    <molecule>Cytochrome b-c1 complex subunit 9</molecule>
    <text evidence="2">Component of the ubiquinol-cytochrome c oxidoreductase (cytochrome b-c1 complex, complex III, CIII). Subunit 9 corresponds to the mitochondrial targeting sequence (MTS) of Rieske protein UQCRFS1. It is retained after processing and incorporated inside complex III, where it remains bound to the complex and localizes between the 2 core subunits UQCRC1/QCR1 and UQCRC2/QCR2.</text>
</comment>
<comment type="subcellular location">
    <subcellularLocation>
        <location evidence="4">Mitochondrion inner membrane</location>
        <topology evidence="4">Single-pass membrane protein</topology>
    </subcellularLocation>
</comment>
<comment type="PTM">
    <text evidence="5">Proteolytic processing is necessary for the correct insertion of UQCRFS1 in the complex III dimer. Several fragments are generated during UQCRFS1 insertion, most probably due to the endogenous matrix-processing peptidase (MPP) activity of the 2 core protein subunits UQCRC1/QCR1 and UQCRC2/QCR2, which are homologous to the 2 mitochondrial-processing peptidase (MPP) subunits beta-MPP and alpha-MPP respectively. The action of the protease is also necessary for the clearance of the UQCRFS1 fragments.</text>
</comment>
<comment type="miscellaneous">
    <text>The Rieske protein is a high potential 2Fe-2S protein.</text>
</comment>
<comment type="similarity">
    <text evidence="7">Belongs to the Rieske iron-sulfur protein family.</text>
</comment>
<comment type="caution">
    <text evidence="2 3">Several peptides are generated during UQCRFS1 insertion. According to some authors, the identification of the transit peptide as the subunit 9, does not necessary imply that it must be considered as a structural subunit of the complex III dimer as additional fragments from UQCRFS1 are also present.</text>
</comment>
<keyword id="KW-0001">2Fe-2S</keyword>
<keyword id="KW-1015">Disulfide bond</keyword>
<keyword id="KW-0249">Electron transport</keyword>
<keyword id="KW-0408">Iron</keyword>
<keyword id="KW-0411">Iron-sulfur</keyword>
<keyword id="KW-0472">Membrane</keyword>
<keyword id="KW-0479">Metal-binding</keyword>
<keyword id="KW-0496">Mitochondrion</keyword>
<keyword id="KW-0999">Mitochondrion inner membrane</keyword>
<keyword id="KW-0679">Respiratory chain</keyword>
<keyword id="KW-0809">Transit peptide</keyword>
<keyword id="KW-1278">Translocase</keyword>
<keyword id="KW-0812">Transmembrane</keyword>
<keyword id="KW-1133">Transmembrane helix</keyword>
<keyword id="KW-0813">Transport</keyword>
<organism>
    <name type="scientific">Pongo pygmaeus</name>
    <name type="common">Bornean orangutan</name>
    <dbReference type="NCBI Taxonomy" id="9600"/>
    <lineage>
        <taxon>Eukaryota</taxon>
        <taxon>Metazoa</taxon>
        <taxon>Chordata</taxon>
        <taxon>Craniata</taxon>
        <taxon>Vertebrata</taxon>
        <taxon>Euteleostomi</taxon>
        <taxon>Mammalia</taxon>
        <taxon>Eutheria</taxon>
        <taxon>Euarchontoglires</taxon>
        <taxon>Primates</taxon>
        <taxon>Haplorrhini</taxon>
        <taxon>Catarrhini</taxon>
        <taxon>Hominidae</taxon>
        <taxon>Pongo</taxon>
    </lineage>
</organism>
<gene>
    <name type="primary">UQCRFS1</name>
</gene>
<name>UCRI_PONPY</name>
<evidence type="ECO:0000250" key="1">
    <source>
        <dbReference type="UniProtKB" id="P08067"/>
    </source>
</evidence>
<evidence type="ECO:0000250" key="2">
    <source>
        <dbReference type="UniProtKB" id="P13272"/>
    </source>
</evidence>
<evidence type="ECO:0000250" key="3">
    <source>
        <dbReference type="UniProtKB" id="P47985"/>
    </source>
</evidence>
<evidence type="ECO:0000250" key="4">
    <source>
        <dbReference type="UniProtKB" id="Q5ZLR5"/>
    </source>
</evidence>
<evidence type="ECO:0000250" key="5">
    <source>
        <dbReference type="UniProtKB" id="Q9CR68"/>
    </source>
</evidence>
<evidence type="ECO:0000255" key="6">
    <source>
        <dbReference type="PROSITE-ProRule" id="PRU00628"/>
    </source>
</evidence>
<evidence type="ECO:0000305" key="7"/>